<evidence type="ECO:0000256" key="1">
    <source>
        <dbReference type="SAM" id="MobiDB-lite"/>
    </source>
</evidence>
<evidence type="ECO:0000269" key="2">
    <source>
    </source>
</evidence>
<evidence type="ECO:0000305" key="3"/>
<feature type="initiator methionine" description="Removed" evidence="2">
    <location>
        <position position="1"/>
    </location>
</feature>
<feature type="chain" id="PRO_0000158327" description="Histone H4">
    <location>
        <begin position="2"/>
        <end position="25" status="greater than"/>
    </location>
</feature>
<feature type="DNA-binding region">
    <location>
        <begin position="17"/>
        <end position="21"/>
    </location>
</feature>
<feature type="region of interest" description="Disordered" evidence="1">
    <location>
        <begin position="1"/>
        <end position="25"/>
    </location>
</feature>
<feature type="compositionally biased region" description="Gly residues" evidence="1">
    <location>
        <begin position="1"/>
        <end position="14"/>
    </location>
</feature>
<feature type="compositionally biased region" description="Basic residues" evidence="1">
    <location>
        <begin position="15"/>
        <end position="25"/>
    </location>
</feature>
<feature type="modified residue" description="N-acetylserine" evidence="2">
    <location>
        <position position="2"/>
    </location>
</feature>
<feature type="modified residue" description="N6-acetyllysine" evidence="2">
    <location>
        <position position="6"/>
    </location>
</feature>
<feature type="modified residue" description="N6-acetyllysine" evidence="2">
    <location>
        <position position="9"/>
    </location>
</feature>
<feature type="modified residue" description="N6-acetyllysine" evidence="2">
    <location>
        <position position="13"/>
    </location>
</feature>
<feature type="modified residue" description="N6-acetyllysine" evidence="2">
    <location>
        <position position="17"/>
    </location>
</feature>
<feature type="modified residue" description="N6-acetyllysine" evidence="2">
    <location>
        <position position="21"/>
    </location>
</feature>
<feature type="non-terminal residue">
    <location>
        <position position="25"/>
    </location>
</feature>
<dbReference type="PIR" id="B43295">
    <property type="entry name" value="B43295"/>
</dbReference>
<dbReference type="iPTMnet" id="P62789"/>
<dbReference type="GO" id="GO:0000786">
    <property type="term" value="C:nucleosome"/>
    <property type="evidence" value="ECO:0007669"/>
    <property type="project" value="UniProtKB-KW"/>
</dbReference>
<dbReference type="GO" id="GO:0005634">
    <property type="term" value="C:nucleus"/>
    <property type="evidence" value="ECO:0007669"/>
    <property type="project" value="UniProtKB-SubCell"/>
</dbReference>
<dbReference type="GO" id="GO:0003677">
    <property type="term" value="F:DNA binding"/>
    <property type="evidence" value="ECO:0007669"/>
    <property type="project" value="UniProtKB-KW"/>
</dbReference>
<dbReference type="GO" id="GO:0046982">
    <property type="term" value="F:protein heterodimerization activity"/>
    <property type="evidence" value="ECO:0007669"/>
    <property type="project" value="InterPro"/>
</dbReference>
<dbReference type="GO" id="GO:0030527">
    <property type="term" value="F:structural constituent of chromatin"/>
    <property type="evidence" value="ECO:0007669"/>
    <property type="project" value="InterPro"/>
</dbReference>
<dbReference type="Gene3D" id="1.10.20.10">
    <property type="entry name" value="Histone, subunit A"/>
    <property type="match status" value="1"/>
</dbReference>
<dbReference type="InterPro" id="IPR009072">
    <property type="entry name" value="Histone-fold"/>
</dbReference>
<dbReference type="InterPro" id="IPR001951">
    <property type="entry name" value="Histone_H4"/>
</dbReference>
<dbReference type="InterPro" id="IPR019809">
    <property type="entry name" value="Histone_H4_CS"/>
</dbReference>
<dbReference type="PRINTS" id="PR00623">
    <property type="entry name" value="HISTONEH4"/>
</dbReference>
<dbReference type="PROSITE" id="PS00047">
    <property type="entry name" value="HISTONE_H4"/>
    <property type="match status" value="1"/>
</dbReference>
<organism>
    <name type="scientific">Medicago sativa</name>
    <name type="common">Alfalfa</name>
    <dbReference type="NCBI Taxonomy" id="3879"/>
    <lineage>
        <taxon>Eukaryota</taxon>
        <taxon>Viridiplantae</taxon>
        <taxon>Streptophyta</taxon>
        <taxon>Embryophyta</taxon>
        <taxon>Tracheophyta</taxon>
        <taxon>Spermatophyta</taxon>
        <taxon>Magnoliopsida</taxon>
        <taxon>eudicotyledons</taxon>
        <taxon>Gunneridae</taxon>
        <taxon>Pentapetalae</taxon>
        <taxon>rosids</taxon>
        <taxon>fabids</taxon>
        <taxon>Fabales</taxon>
        <taxon>Fabaceae</taxon>
        <taxon>Papilionoideae</taxon>
        <taxon>50 kb inversion clade</taxon>
        <taxon>NPAAA clade</taxon>
        <taxon>Hologalegina</taxon>
        <taxon>IRL clade</taxon>
        <taxon>Trifolieae</taxon>
        <taxon>Medicago</taxon>
    </lineage>
</organism>
<accession>P62789</accession>
<accession>P02308</accession>
<accession>P59258</accession>
<keyword id="KW-0007">Acetylation</keyword>
<keyword id="KW-0158">Chromosome</keyword>
<keyword id="KW-0903">Direct protein sequencing</keyword>
<keyword id="KW-0238">DNA-binding</keyword>
<keyword id="KW-0544">Nucleosome core</keyword>
<keyword id="KW-0539">Nucleus</keyword>
<proteinExistence type="evidence at protein level"/>
<comment type="function">
    <text>Core component of nucleosome. Nucleosomes wrap and compact DNA into chromatin, limiting DNA accessibility to the cellular machineries which require DNA as a template. Histones thereby play a central role in transcription regulation, DNA repair, DNA replication and chromosomal stability. DNA accessibility is regulated via a complex set of post-translational modifications of histones, also called histone code, and nucleosome remodeling.</text>
</comment>
<comment type="subunit">
    <text>The nucleosome is a histone octamer containing two molecules each of H2A, H2B, H3 and H4 assembled in one H3-H4 heterotetramer and two H2A-H2B heterodimers. The octamer wraps approximately 147 bp of DNA.</text>
</comment>
<comment type="subcellular location">
    <subcellularLocation>
        <location>Nucleus</location>
    </subcellularLocation>
    <subcellularLocation>
        <location>Chromosome</location>
    </subcellularLocation>
</comment>
<comment type="similarity">
    <text evidence="3">Belongs to the histone H4 family.</text>
</comment>
<reference key="1">
    <citation type="journal article" date="1992" name="Biochemistry">
        <title>Identification of five sites of acetylation in alfalfa histone H4.</title>
        <authorList>
            <person name="Waterborg J.H."/>
        </authorList>
    </citation>
    <scope>PROTEIN SEQUENCE OF 2-25</scope>
    <scope>ACETYLATION AT SER-2; LYS-6; LYS-9; LYS-13; LYS-17 AND LYS-21</scope>
    <source>
        <strain>cv. R4</strain>
    </source>
</reference>
<sequence>MSGRGKGGKGLGKGGAKRHRKVLRD</sequence>
<protein>
    <recommendedName>
        <fullName>Histone H4</fullName>
    </recommendedName>
</protein>
<name>H4_MEDSA</name>